<gene>
    <name type="primary">acyP</name>
    <name type="ordered locus">DVU_1192</name>
</gene>
<comment type="catalytic activity">
    <reaction>
        <text>an acyl phosphate + H2O = a carboxylate + phosphate + H(+)</text>
        <dbReference type="Rhea" id="RHEA:14965"/>
        <dbReference type="ChEBI" id="CHEBI:15377"/>
        <dbReference type="ChEBI" id="CHEBI:15378"/>
        <dbReference type="ChEBI" id="CHEBI:29067"/>
        <dbReference type="ChEBI" id="CHEBI:43474"/>
        <dbReference type="ChEBI" id="CHEBI:59918"/>
        <dbReference type="EC" id="3.6.1.7"/>
    </reaction>
</comment>
<comment type="similarity">
    <text evidence="3">Belongs to the acylphosphatase family.</text>
</comment>
<keyword id="KW-0378">Hydrolase</keyword>
<keyword id="KW-1185">Reference proteome</keyword>
<protein>
    <recommendedName>
        <fullName>Acylphosphatase</fullName>
        <ecNumber>3.6.1.7</ecNumber>
    </recommendedName>
    <alternativeName>
        <fullName>Acylphosphate phosphohydrolase</fullName>
    </alternativeName>
</protein>
<sequence>MPRRSYSVIGRVQGVGFRSWTRRTALRLDLRGWVRNEPDGTVRLCADGTDEALATLETALRKGPMFSRVDHVVKHDDPAHEGPLPDTFDIRFRAPGSASE</sequence>
<accession>Q72CU1</accession>
<feature type="chain" id="PRO_0000326702" description="Acylphosphatase">
    <location>
        <begin position="1"/>
        <end position="100"/>
    </location>
</feature>
<feature type="domain" description="Acylphosphatase-like" evidence="1">
    <location>
        <begin position="3"/>
        <end position="92"/>
    </location>
</feature>
<feature type="region of interest" description="Disordered" evidence="2">
    <location>
        <begin position="76"/>
        <end position="100"/>
    </location>
</feature>
<feature type="active site" evidence="1">
    <location>
        <position position="18"/>
    </location>
</feature>
<feature type="active site" evidence="1">
    <location>
        <position position="36"/>
    </location>
</feature>
<evidence type="ECO:0000255" key="1">
    <source>
        <dbReference type="PROSITE-ProRule" id="PRU00520"/>
    </source>
</evidence>
<evidence type="ECO:0000256" key="2">
    <source>
        <dbReference type="SAM" id="MobiDB-lite"/>
    </source>
</evidence>
<evidence type="ECO:0000305" key="3"/>
<organism>
    <name type="scientific">Nitratidesulfovibrio vulgaris (strain ATCC 29579 / DSM 644 / CCUG 34227 / NCIMB 8303 / VKM B-1760 / Hildenborough)</name>
    <name type="common">Desulfovibrio vulgaris</name>
    <dbReference type="NCBI Taxonomy" id="882"/>
    <lineage>
        <taxon>Bacteria</taxon>
        <taxon>Pseudomonadati</taxon>
        <taxon>Thermodesulfobacteriota</taxon>
        <taxon>Desulfovibrionia</taxon>
        <taxon>Desulfovibrionales</taxon>
        <taxon>Desulfovibrionaceae</taxon>
        <taxon>Nitratidesulfovibrio</taxon>
    </lineage>
</organism>
<name>ACYP_NITV2</name>
<reference key="1">
    <citation type="journal article" date="2004" name="Nat. Biotechnol.">
        <title>The genome sequence of the anaerobic, sulfate-reducing bacterium Desulfovibrio vulgaris Hildenborough.</title>
        <authorList>
            <person name="Heidelberg J.F."/>
            <person name="Seshadri R."/>
            <person name="Haveman S.A."/>
            <person name="Hemme C.L."/>
            <person name="Paulsen I.T."/>
            <person name="Kolonay J.F."/>
            <person name="Eisen J.A."/>
            <person name="Ward N.L."/>
            <person name="Methe B.A."/>
            <person name="Brinkac L.M."/>
            <person name="Daugherty S.C."/>
            <person name="DeBoy R.T."/>
            <person name="Dodson R.J."/>
            <person name="Durkin A.S."/>
            <person name="Madupu R."/>
            <person name="Nelson W.C."/>
            <person name="Sullivan S.A."/>
            <person name="Fouts D.E."/>
            <person name="Haft D.H."/>
            <person name="Selengut J."/>
            <person name="Peterson J.D."/>
            <person name="Davidsen T.M."/>
            <person name="Zafar N."/>
            <person name="Zhou L."/>
            <person name="Radune D."/>
            <person name="Dimitrov G."/>
            <person name="Hance M."/>
            <person name="Tran K."/>
            <person name="Khouri H.M."/>
            <person name="Gill J."/>
            <person name="Utterback T.R."/>
            <person name="Feldblyum T.V."/>
            <person name="Wall J.D."/>
            <person name="Voordouw G."/>
            <person name="Fraser C.M."/>
        </authorList>
    </citation>
    <scope>NUCLEOTIDE SEQUENCE [LARGE SCALE GENOMIC DNA]</scope>
    <source>
        <strain>ATCC 29579 / DSM 644 / CCUG 34227 / NCIMB 8303 / VKM B-1760 / Hildenborough</strain>
    </source>
</reference>
<proteinExistence type="inferred from homology"/>
<dbReference type="EC" id="3.6.1.7"/>
<dbReference type="EMBL" id="AE017285">
    <property type="protein sequence ID" value="AAS95670.1"/>
    <property type="molecule type" value="Genomic_DNA"/>
</dbReference>
<dbReference type="RefSeq" id="WP_010938488.1">
    <property type="nucleotide sequence ID" value="NC_002937.3"/>
</dbReference>
<dbReference type="RefSeq" id="YP_010411.1">
    <property type="nucleotide sequence ID" value="NC_002937.3"/>
</dbReference>
<dbReference type="SMR" id="Q72CU1"/>
<dbReference type="IntAct" id="Q72CU1">
    <property type="interactions" value="1"/>
</dbReference>
<dbReference type="STRING" id="882.DVU_1192"/>
<dbReference type="PaxDb" id="882-DVU_1192"/>
<dbReference type="EnsemblBacteria" id="AAS95670">
    <property type="protein sequence ID" value="AAS95670"/>
    <property type="gene ID" value="DVU_1192"/>
</dbReference>
<dbReference type="KEGG" id="dvu:DVU_1192"/>
<dbReference type="PATRIC" id="fig|882.5.peg.1116"/>
<dbReference type="eggNOG" id="COG1254">
    <property type="taxonomic scope" value="Bacteria"/>
</dbReference>
<dbReference type="HOGENOM" id="CLU_141932_3_2_7"/>
<dbReference type="OrthoDB" id="5295388at2"/>
<dbReference type="PhylomeDB" id="Q72CU1"/>
<dbReference type="Proteomes" id="UP000002194">
    <property type="component" value="Chromosome"/>
</dbReference>
<dbReference type="GO" id="GO:0003998">
    <property type="term" value="F:acylphosphatase activity"/>
    <property type="evidence" value="ECO:0007669"/>
    <property type="project" value="UniProtKB-EC"/>
</dbReference>
<dbReference type="Gene3D" id="3.30.70.100">
    <property type="match status" value="1"/>
</dbReference>
<dbReference type="InterPro" id="IPR020456">
    <property type="entry name" value="Acylphosphatase"/>
</dbReference>
<dbReference type="InterPro" id="IPR001792">
    <property type="entry name" value="Acylphosphatase-like_dom"/>
</dbReference>
<dbReference type="InterPro" id="IPR036046">
    <property type="entry name" value="Acylphosphatase-like_dom_sf"/>
</dbReference>
<dbReference type="InterPro" id="IPR017968">
    <property type="entry name" value="Acylphosphatase_CS"/>
</dbReference>
<dbReference type="PANTHER" id="PTHR47268">
    <property type="entry name" value="ACYLPHOSPHATASE"/>
    <property type="match status" value="1"/>
</dbReference>
<dbReference type="PANTHER" id="PTHR47268:SF4">
    <property type="entry name" value="ACYLPHOSPHATASE"/>
    <property type="match status" value="1"/>
</dbReference>
<dbReference type="Pfam" id="PF00708">
    <property type="entry name" value="Acylphosphatase"/>
    <property type="match status" value="1"/>
</dbReference>
<dbReference type="PRINTS" id="PR00112">
    <property type="entry name" value="ACYLPHPHTASE"/>
</dbReference>
<dbReference type="SUPFAM" id="SSF54975">
    <property type="entry name" value="Acylphosphatase/BLUF domain-like"/>
    <property type="match status" value="1"/>
</dbReference>
<dbReference type="PROSITE" id="PS00150">
    <property type="entry name" value="ACYLPHOSPHATASE_1"/>
    <property type="match status" value="1"/>
</dbReference>
<dbReference type="PROSITE" id="PS00151">
    <property type="entry name" value="ACYLPHOSPHATASE_2"/>
    <property type="match status" value="1"/>
</dbReference>
<dbReference type="PROSITE" id="PS51160">
    <property type="entry name" value="ACYLPHOSPHATASE_3"/>
    <property type="match status" value="1"/>
</dbReference>